<proteinExistence type="predicted"/>
<protein>
    <recommendedName>
        <fullName>Uncharacterized protein H16_B0147</fullName>
    </recommendedName>
    <alternativeName>
        <fullName>ORF 7</fullName>
    </alternativeName>
</protein>
<comment type="similarity">
    <text evidence="1">To H.influenzae HI_1053 and P.denitrificans COX locus Uncharacterized protein 4.</text>
</comment>
<keyword id="KW-1185">Reference proteome</keyword>
<accession>P27749</accession>
<accession>Q0K4X1</accession>
<name>Y4147_CUPNH</name>
<sequence>MTTDLKTRLTEINRQFGALGQAQPAAMSAFQGVMKAATQDGSLPAAVKELIAVALAVQKGCDDCVLFHTSQALRHRATREQLAEVLAINIEMGGGPGAMYASKALAYFDALNA</sequence>
<reference key="1">
    <citation type="journal article" date="1991" name="J. Bacteriol.">
        <title>Identification and molecular characterization of the Alcaligenes eutrophus H16 aco operon genes involved in acetoin catabolism.</title>
        <authorList>
            <person name="Priefert H."/>
            <person name="Hein S."/>
            <person name="Krueger N."/>
            <person name="Zeh K."/>
            <person name="Schmidt B."/>
            <person name="Steinbuechel A."/>
        </authorList>
    </citation>
    <scope>NUCLEOTIDE SEQUENCE [GENOMIC DNA]</scope>
</reference>
<reference key="2">
    <citation type="journal article" date="2006" name="Nat. Biotechnol.">
        <title>Genome sequence of the bioplastic-producing 'Knallgas' bacterium Ralstonia eutropha H16.</title>
        <authorList>
            <person name="Pohlmann A."/>
            <person name="Fricke W.F."/>
            <person name="Reinecke F."/>
            <person name="Kusian B."/>
            <person name="Liesegang H."/>
            <person name="Cramm R."/>
            <person name="Eitinger T."/>
            <person name="Ewering C."/>
            <person name="Poetter M."/>
            <person name="Schwartz E."/>
            <person name="Strittmatter A."/>
            <person name="Voss I."/>
            <person name="Gottschalk G."/>
            <person name="Steinbuechel A."/>
            <person name="Friedrich B."/>
            <person name="Bowien B."/>
        </authorList>
    </citation>
    <scope>NUCLEOTIDE SEQUENCE [LARGE SCALE GENOMIC DNA]</scope>
    <source>
        <strain>ATCC 17699 / DSM 428 / KCTC 22496 / NCIMB 10442 / H16 / Stanier 337</strain>
    </source>
</reference>
<gene>
    <name type="ordered locus">H16_B0147</name>
</gene>
<organism>
    <name type="scientific">Cupriavidus necator (strain ATCC 17699 / DSM 428 / KCTC 22496 / NCIMB 10442 / H16 / Stanier 337)</name>
    <name type="common">Ralstonia eutropha</name>
    <dbReference type="NCBI Taxonomy" id="381666"/>
    <lineage>
        <taxon>Bacteria</taxon>
        <taxon>Pseudomonadati</taxon>
        <taxon>Pseudomonadota</taxon>
        <taxon>Betaproteobacteria</taxon>
        <taxon>Burkholderiales</taxon>
        <taxon>Burkholderiaceae</taxon>
        <taxon>Cupriavidus</taxon>
    </lineage>
</organism>
<evidence type="ECO:0000305" key="1"/>
<dbReference type="EMBL" id="M66060">
    <property type="protein sequence ID" value="AAA21951.1"/>
    <property type="molecule type" value="Genomic_DNA"/>
</dbReference>
<dbReference type="EMBL" id="AM260480">
    <property type="protein sequence ID" value="CAJ94953.1"/>
    <property type="molecule type" value="Genomic_DNA"/>
</dbReference>
<dbReference type="RefSeq" id="WP_010813531.1">
    <property type="nucleotide sequence ID" value="NZ_CP039288.1"/>
</dbReference>
<dbReference type="SMR" id="P27749"/>
<dbReference type="STRING" id="381666.H16_B0147"/>
<dbReference type="KEGG" id="reh:H16_B0147"/>
<dbReference type="eggNOG" id="COG0599">
    <property type="taxonomic scope" value="Bacteria"/>
</dbReference>
<dbReference type="HOGENOM" id="CLU_137228_2_0_4"/>
<dbReference type="OrthoDB" id="1683318at2"/>
<dbReference type="Proteomes" id="UP000008210">
    <property type="component" value="Chromosome 2"/>
</dbReference>
<dbReference type="GO" id="GO:0051920">
    <property type="term" value="F:peroxiredoxin activity"/>
    <property type="evidence" value="ECO:0007669"/>
    <property type="project" value="InterPro"/>
</dbReference>
<dbReference type="Gene3D" id="1.20.1290.10">
    <property type="entry name" value="AhpD-like"/>
    <property type="match status" value="1"/>
</dbReference>
<dbReference type="InterPro" id="IPR029032">
    <property type="entry name" value="AhpD-like"/>
</dbReference>
<dbReference type="InterPro" id="IPR004675">
    <property type="entry name" value="AhpD_core"/>
</dbReference>
<dbReference type="InterPro" id="IPR003779">
    <property type="entry name" value="CMD-like"/>
</dbReference>
<dbReference type="NCBIfam" id="TIGR00778">
    <property type="entry name" value="ahpD_dom"/>
    <property type="match status" value="1"/>
</dbReference>
<dbReference type="PANTHER" id="PTHR33930">
    <property type="entry name" value="ALKYL HYDROPEROXIDE REDUCTASE AHPD"/>
    <property type="match status" value="1"/>
</dbReference>
<dbReference type="PANTHER" id="PTHR33930:SF2">
    <property type="entry name" value="BLR3452 PROTEIN"/>
    <property type="match status" value="1"/>
</dbReference>
<dbReference type="Pfam" id="PF02627">
    <property type="entry name" value="CMD"/>
    <property type="match status" value="1"/>
</dbReference>
<dbReference type="SUPFAM" id="SSF69118">
    <property type="entry name" value="AhpD-like"/>
    <property type="match status" value="1"/>
</dbReference>
<feature type="chain" id="PRO_0000066107" description="Uncharacterized protein H16_B0147">
    <location>
        <begin position="1"/>
        <end position="113"/>
    </location>
</feature>